<gene>
    <name type="ORF">ORF46</name>
</gene>
<dbReference type="EMBL" id="X04370">
    <property type="protein sequence ID" value="CAA27929.1"/>
    <property type="molecule type" value="Genomic_DNA"/>
</dbReference>
<dbReference type="PIR" id="B27344">
    <property type="entry name" value="WZBE46"/>
</dbReference>
<dbReference type="SMR" id="P09295"/>
<dbReference type="Proteomes" id="UP000002602">
    <property type="component" value="Genome"/>
</dbReference>
<dbReference type="GO" id="GO:0030430">
    <property type="term" value="C:host cell cytoplasm"/>
    <property type="evidence" value="ECO:0007669"/>
    <property type="project" value="UniProtKB-SubCell"/>
</dbReference>
<dbReference type="GO" id="GO:0042025">
    <property type="term" value="C:host cell nucleus"/>
    <property type="evidence" value="ECO:0007669"/>
    <property type="project" value="UniProtKB-SubCell"/>
</dbReference>
<dbReference type="GO" id="GO:0019033">
    <property type="term" value="C:viral tegument"/>
    <property type="evidence" value="ECO:0007669"/>
    <property type="project" value="UniProtKB-SubCell"/>
</dbReference>
<dbReference type="InterPro" id="IPR005207">
    <property type="entry name" value="Herpes_UL14"/>
</dbReference>
<dbReference type="Pfam" id="PF03580">
    <property type="entry name" value="Herpes_UL14"/>
    <property type="match status" value="1"/>
</dbReference>
<evidence type="ECO:0000250" key="1"/>
<evidence type="ECO:0000256" key="2">
    <source>
        <dbReference type="SAM" id="MobiDB-lite"/>
    </source>
</evidence>
<evidence type="ECO:0000305" key="3"/>
<proteinExistence type="inferred from homology"/>
<keyword id="KW-1035">Host cytoplasm</keyword>
<keyword id="KW-1048">Host nucleus</keyword>
<keyword id="KW-1185">Reference proteome</keyword>
<keyword id="KW-0946">Virion</keyword>
<keyword id="KW-0920">Virion tegument</keyword>
<comment type="function">
    <text evidence="1">Contributes to the nuclear transport of the viral transcriptional activator VP16 homolog during the early phase of infection. Therefore, participates indirectly in the regulation of the immediate-early gene expression. Additionally, seems to be important for efficient nuclear targeting of capsids (By similarity).</text>
</comment>
<comment type="subcellular location">
    <subcellularLocation>
        <location evidence="1">Virion tegument</location>
    </subcellularLocation>
    <subcellularLocation>
        <location evidence="1">Host cytoplasm</location>
    </subcellularLocation>
    <subcellularLocation>
        <location evidence="1">Host nucleus</location>
    </subcellularLocation>
</comment>
<comment type="similarity">
    <text evidence="3">Belongs to the alphaherpesvirinae HHV-1 UL14 protein family.</text>
</comment>
<accession>P09295</accession>
<organism>
    <name type="scientific">Varicella-zoster virus (strain Dumas)</name>
    <name type="common">HHV-3</name>
    <name type="synonym">Human herpesvirus 3</name>
    <dbReference type="NCBI Taxonomy" id="10338"/>
    <lineage>
        <taxon>Viruses</taxon>
        <taxon>Duplodnaviria</taxon>
        <taxon>Heunggongvirae</taxon>
        <taxon>Peploviricota</taxon>
        <taxon>Herviviricetes</taxon>
        <taxon>Herpesvirales</taxon>
        <taxon>Orthoherpesviridae</taxon>
        <taxon>Alphaherpesvirinae</taxon>
        <taxon>Varicellovirus</taxon>
        <taxon>Varicellovirus humanalpha3</taxon>
        <taxon>Human herpesvirus 3</taxon>
    </lineage>
</organism>
<name>TEG3_VZVD</name>
<feature type="chain" id="PRO_0000115939" description="Tegument protein UL14 homolog">
    <location>
        <begin position="1"/>
        <end position="199"/>
    </location>
</feature>
<feature type="region of interest" description="Disordered" evidence="2">
    <location>
        <begin position="176"/>
        <end position="199"/>
    </location>
</feature>
<feature type="compositionally biased region" description="Polar residues" evidence="2">
    <location>
        <begin position="176"/>
        <end position="191"/>
    </location>
</feature>
<protein>
    <recommendedName>
        <fullName>Tegument protein UL14 homolog</fullName>
    </recommendedName>
</protein>
<reference key="1">
    <citation type="journal article" date="1986" name="J. Gen. Virol.">
        <title>The complete DNA sequence of varicella-zoster virus.</title>
        <authorList>
            <person name="Davison A.J."/>
            <person name="Scott J.E."/>
        </authorList>
    </citation>
    <scope>NUCLEOTIDE SEQUENCE [LARGE SCALE GENOMIC DNA]</scope>
</reference>
<organismHost>
    <name type="scientific">Homo sapiens</name>
    <name type="common">Human</name>
    <dbReference type="NCBI Taxonomy" id="9606"/>
</organismHost>
<sequence>MSGHTPTYASHRRNRVKLVEAHNRAGLFKERTLDLIRGGASVQDPAFVYAFTAAKEACADLNNQLRSAARIASVEQKIRDIQSKVEEQTSIQQILNTNRRYIAPDFIRGLDKTEDDNTDNIDRLEDAVGPNIEHENHTWFGEDDEALLTQWMLTTHPPTSKYLQLQDLCVPTTIPTDMNQMQPQPISKNENPPTPHTDV</sequence>